<name>TIG_AZOSB</name>
<keyword id="KW-0131">Cell cycle</keyword>
<keyword id="KW-0132">Cell division</keyword>
<keyword id="KW-0143">Chaperone</keyword>
<keyword id="KW-0963">Cytoplasm</keyword>
<keyword id="KW-0413">Isomerase</keyword>
<keyword id="KW-1185">Reference proteome</keyword>
<keyword id="KW-0697">Rotamase</keyword>
<reference key="1">
    <citation type="journal article" date="2006" name="Nat. Biotechnol.">
        <title>Complete genome of the mutualistic, N2-fixing grass endophyte Azoarcus sp. strain BH72.</title>
        <authorList>
            <person name="Krause A."/>
            <person name="Ramakumar A."/>
            <person name="Bartels D."/>
            <person name="Battistoni F."/>
            <person name="Bekel T."/>
            <person name="Boch J."/>
            <person name="Boehm M."/>
            <person name="Friedrich F."/>
            <person name="Hurek T."/>
            <person name="Krause L."/>
            <person name="Linke B."/>
            <person name="McHardy A.C."/>
            <person name="Sarkar A."/>
            <person name="Schneiker S."/>
            <person name="Syed A.A."/>
            <person name="Thauer R."/>
            <person name="Vorhoelter F.-J."/>
            <person name="Weidner S."/>
            <person name="Puehler A."/>
            <person name="Reinhold-Hurek B."/>
            <person name="Kaiser O."/>
            <person name="Goesmann A."/>
        </authorList>
    </citation>
    <scope>NUCLEOTIDE SEQUENCE [LARGE SCALE GENOMIC DNA]</scope>
    <source>
        <strain>BH72</strain>
    </source>
</reference>
<organism>
    <name type="scientific">Azoarcus sp. (strain BH72)</name>
    <dbReference type="NCBI Taxonomy" id="418699"/>
    <lineage>
        <taxon>Bacteria</taxon>
        <taxon>Pseudomonadati</taxon>
        <taxon>Pseudomonadota</taxon>
        <taxon>Betaproteobacteria</taxon>
        <taxon>Rhodocyclales</taxon>
        <taxon>Zoogloeaceae</taxon>
        <taxon>Azoarcus</taxon>
    </lineage>
</organism>
<proteinExistence type="inferred from homology"/>
<sequence>MQTTQEIQTSQNPLERRIDMSLAVADIDKAVEARLKQMARSVKMPGFRPGKVPLKIVEQTYGPQARSEAIGAAVERAFGEKVREQNLRVAGYPRIEPKEAGSEGALEFSAVFEVYPEVVVGDLSAQSIEQPTLVVGDAEVDKTIDVLRKQRTTFEAAARPTQDGDRVTIDFAGRKDGELFEGGQATDFPFVIGAGSMLKDFETAVVGLGVGETKTFDMTFPEDYHAKHLAGQPVQFEVTLKSVEAPKLPEVDSDFAKALGVADGNVDKLREEVKGNLEREVKRRIQAKVKEQAMDALLAVTPIEVPKALVESEATQLAENAKRDLAARGMNTKDIPVQPAWFGDQAMRRVKLGLIMAEVVKGNELHAKPEQIRGLVEEMAQSYEDPSELVRWYYAQPDRLAQAEAVVIEDNVVAWVLSKAQTSEKSIAFDDLMGNAA</sequence>
<feature type="chain" id="PRO_0000322443" description="Trigger factor">
    <location>
        <begin position="1"/>
        <end position="437"/>
    </location>
</feature>
<feature type="domain" description="PPIase FKBP-type" evidence="1">
    <location>
        <begin position="164"/>
        <end position="249"/>
    </location>
</feature>
<accession>A1K784</accession>
<evidence type="ECO:0000255" key="1">
    <source>
        <dbReference type="HAMAP-Rule" id="MF_00303"/>
    </source>
</evidence>
<comment type="function">
    <text evidence="1">Involved in protein export. Acts as a chaperone by maintaining the newly synthesized protein in an open conformation. Functions as a peptidyl-prolyl cis-trans isomerase.</text>
</comment>
<comment type="catalytic activity">
    <reaction evidence="1">
        <text>[protein]-peptidylproline (omega=180) = [protein]-peptidylproline (omega=0)</text>
        <dbReference type="Rhea" id="RHEA:16237"/>
        <dbReference type="Rhea" id="RHEA-COMP:10747"/>
        <dbReference type="Rhea" id="RHEA-COMP:10748"/>
        <dbReference type="ChEBI" id="CHEBI:83833"/>
        <dbReference type="ChEBI" id="CHEBI:83834"/>
        <dbReference type="EC" id="5.2.1.8"/>
    </reaction>
</comment>
<comment type="subcellular location">
    <subcellularLocation>
        <location>Cytoplasm</location>
    </subcellularLocation>
    <text evidence="1">About half TF is bound to the ribosome near the polypeptide exit tunnel while the other half is free in the cytoplasm.</text>
</comment>
<comment type="domain">
    <text evidence="1">Consists of 3 domains; the N-terminus binds the ribosome, the middle domain has PPIase activity, while the C-terminus has intrinsic chaperone activity on its own.</text>
</comment>
<comment type="similarity">
    <text evidence="1">Belongs to the FKBP-type PPIase family. Tig subfamily.</text>
</comment>
<protein>
    <recommendedName>
        <fullName evidence="1">Trigger factor</fullName>
        <shortName evidence="1">TF</shortName>
        <ecNumber evidence="1">5.2.1.8</ecNumber>
    </recommendedName>
    <alternativeName>
        <fullName evidence="1">PPIase</fullName>
    </alternativeName>
</protein>
<dbReference type="EC" id="5.2.1.8" evidence="1"/>
<dbReference type="EMBL" id="AM406670">
    <property type="protein sequence ID" value="CAL94689.1"/>
    <property type="molecule type" value="Genomic_DNA"/>
</dbReference>
<dbReference type="RefSeq" id="WP_011765803.1">
    <property type="nucleotide sequence ID" value="NC_008702.1"/>
</dbReference>
<dbReference type="SMR" id="A1K784"/>
<dbReference type="STRING" id="62928.azo2072"/>
<dbReference type="KEGG" id="azo:azo2072"/>
<dbReference type="eggNOG" id="COG0544">
    <property type="taxonomic scope" value="Bacteria"/>
</dbReference>
<dbReference type="HOGENOM" id="CLU_033058_2_0_4"/>
<dbReference type="Proteomes" id="UP000002588">
    <property type="component" value="Chromosome"/>
</dbReference>
<dbReference type="GO" id="GO:0005737">
    <property type="term" value="C:cytoplasm"/>
    <property type="evidence" value="ECO:0007669"/>
    <property type="project" value="UniProtKB-SubCell"/>
</dbReference>
<dbReference type="GO" id="GO:0003755">
    <property type="term" value="F:peptidyl-prolyl cis-trans isomerase activity"/>
    <property type="evidence" value="ECO:0007669"/>
    <property type="project" value="UniProtKB-UniRule"/>
</dbReference>
<dbReference type="GO" id="GO:0044183">
    <property type="term" value="F:protein folding chaperone"/>
    <property type="evidence" value="ECO:0007669"/>
    <property type="project" value="TreeGrafter"/>
</dbReference>
<dbReference type="GO" id="GO:0043022">
    <property type="term" value="F:ribosome binding"/>
    <property type="evidence" value="ECO:0007669"/>
    <property type="project" value="TreeGrafter"/>
</dbReference>
<dbReference type="GO" id="GO:0051083">
    <property type="term" value="P:'de novo' cotranslational protein folding"/>
    <property type="evidence" value="ECO:0007669"/>
    <property type="project" value="TreeGrafter"/>
</dbReference>
<dbReference type="GO" id="GO:0051301">
    <property type="term" value="P:cell division"/>
    <property type="evidence" value="ECO:0007669"/>
    <property type="project" value="UniProtKB-KW"/>
</dbReference>
<dbReference type="GO" id="GO:0061077">
    <property type="term" value="P:chaperone-mediated protein folding"/>
    <property type="evidence" value="ECO:0007669"/>
    <property type="project" value="TreeGrafter"/>
</dbReference>
<dbReference type="GO" id="GO:0015031">
    <property type="term" value="P:protein transport"/>
    <property type="evidence" value="ECO:0007669"/>
    <property type="project" value="UniProtKB-UniRule"/>
</dbReference>
<dbReference type="GO" id="GO:0043335">
    <property type="term" value="P:protein unfolding"/>
    <property type="evidence" value="ECO:0007669"/>
    <property type="project" value="TreeGrafter"/>
</dbReference>
<dbReference type="FunFam" id="3.10.50.40:FF:000001">
    <property type="entry name" value="Trigger factor"/>
    <property type="match status" value="1"/>
</dbReference>
<dbReference type="Gene3D" id="3.10.50.40">
    <property type="match status" value="1"/>
</dbReference>
<dbReference type="Gene3D" id="3.30.70.1050">
    <property type="entry name" value="Trigger factor ribosome-binding domain"/>
    <property type="match status" value="1"/>
</dbReference>
<dbReference type="Gene3D" id="1.10.3120.10">
    <property type="entry name" value="Trigger factor, C-terminal domain"/>
    <property type="match status" value="1"/>
</dbReference>
<dbReference type="HAMAP" id="MF_00303">
    <property type="entry name" value="Trigger_factor_Tig"/>
    <property type="match status" value="1"/>
</dbReference>
<dbReference type="InterPro" id="IPR046357">
    <property type="entry name" value="PPIase_dom_sf"/>
</dbReference>
<dbReference type="InterPro" id="IPR001179">
    <property type="entry name" value="PPIase_FKBP_dom"/>
</dbReference>
<dbReference type="InterPro" id="IPR005215">
    <property type="entry name" value="Trig_fac"/>
</dbReference>
<dbReference type="InterPro" id="IPR008880">
    <property type="entry name" value="Trigger_fac_C"/>
</dbReference>
<dbReference type="InterPro" id="IPR037041">
    <property type="entry name" value="Trigger_fac_C_sf"/>
</dbReference>
<dbReference type="InterPro" id="IPR008881">
    <property type="entry name" value="Trigger_fac_ribosome-bd_bac"/>
</dbReference>
<dbReference type="InterPro" id="IPR036611">
    <property type="entry name" value="Trigger_fac_ribosome-bd_sf"/>
</dbReference>
<dbReference type="InterPro" id="IPR027304">
    <property type="entry name" value="Trigger_fact/SurA_dom_sf"/>
</dbReference>
<dbReference type="NCBIfam" id="TIGR00115">
    <property type="entry name" value="tig"/>
    <property type="match status" value="1"/>
</dbReference>
<dbReference type="PANTHER" id="PTHR30560">
    <property type="entry name" value="TRIGGER FACTOR CHAPERONE AND PEPTIDYL-PROLYL CIS/TRANS ISOMERASE"/>
    <property type="match status" value="1"/>
</dbReference>
<dbReference type="PANTHER" id="PTHR30560:SF3">
    <property type="entry name" value="TRIGGER FACTOR-LIKE PROTEIN TIG, CHLOROPLASTIC"/>
    <property type="match status" value="1"/>
</dbReference>
<dbReference type="Pfam" id="PF00254">
    <property type="entry name" value="FKBP_C"/>
    <property type="match status" value="1"/>
</dbReference>
<dbReference type="Pfam" id="PF05698">
    <property type="entry name" value="Trigger_C"/>
    <property type="match status" value="1"/>
</dbReference>
<dbReference type="Pfam" id="PF05697">
    <property type="entry name" value="Trigger_N"/>
    <property type="match status" value="1"/>
</dbReference>
<dbReference type="PIRSF" id="PIRSF003095">
    <property type="entry name" value="Trigger_factor"/>
    <property type="match status" value="1"/>
</dbReference>
<dbReference type="SUPFAM" id="SSF54534">
    <property type="entry name" value="FKBP-like"/>
    <property type="match status" value="1"/>
</dbReference>
<dbReference type="SUPFAM" id="SSF109998">
    <property type="entry name" value="Triger factor/SurA peptide-binding domain-like"/>
    <property type="match status" value="1"/>
</dbReference>
<dbReference type="SUPFAM" id="SSF102735">
    <property type="entry name" value="Trigger factor ribosome-binding domain"/>
    <property type="match status" value="1"/>
</dbReference>
<dbReference type="PROSITE" id="PS50059">
    <property type="entry name" value="FKBP_PPIASE"/>
    <property type="match status" value="1"/>
</dbReference>
<gene>
    <name evidence="1" type="primary">tig</name>
    <name type="ordered locus">azo2072</name>
</gene>